<organism>
    <name type="scientific">Burkholderia lata (strain ATCC 17760 / DSM 23089 / LMG 22485 / NCIMB 9086 / R18194 / 383)</name>
    <dbReference type="NCBI Taxonomy" id="482957"/>
    <lineage>
        <taxon>Bacteria</taxon>
        <taxon>Pseudomonadati</taxon>
        <taxon>Pseudomonadota</taxon>
        <taxon>Betaproteobacteria</taxon>
        <taxon>Burkholderiales</taxon>
        <taxon>Burkholderiaceae</taxon>
        <taxon>Burkholderia</taxon>
        <taxon>Burkholderia cepacia complex</taxon>
    </lineage>
</organism>
<name>CLPX_BURL3</name>
<feature type="chain" id="PRO_1000024533" description="ATP-dependent Clp protease ATP-binding subunit ClpX">
    <location>
        <begin position="1"/>
        <end position="423"/>
    </location>
</feature>
<feature type="domain" description="ClpX-type ZB" evidence="2">
    <location>
        <begin position="3"/>
        <end position="56"/>
    </location>
</feature>
<feature type="binding site" evidence="2">
    <location>
        <position position="15"/>
    </location>
    <ligand>
        <name>Zn(2+)</name>
        <dbReference type="ChEBI" id="CHEBI:29105"/>
    </ligand>
</feature>
<feature type="binding site" evidence="2">
    <location>
        <position position="18"/>
    </location>
    <ligand>
        <name>Zn(2+)</name>
        <dbReference type="ChEBI" id="CHEBI:29105"/>
    </ligand>
</feature>
<feature type="binding site" evidence="2">
    <location>
        <position position="37"/>
    </location>
    <ligand>
        <name>Zn(2+)</name>
        <dbReference type="ChEBI" id="CHEBI:29105"/>
    </ligand>
</feature>
<feature type="binding site" evidence="2">
    <location>
        <position position="40"/>
    </location>
    <ligand>
        <name>Zn(2+)</name>
        <dbReference type="ChEBI" id="CHEBI:29105"/>
    </ligand>
</feature>
<feature type="binding site" evidence="1">
    <location>
        <begin position="122"/>
        <end position="129"/>
    </location>
    <ligand>
        <name>ATP</name>
        <dbReference type="ChEBI" id="CHEBI:30616"/>
    </ligand>
</feature>
<evidence type="ECO:0000255" key="1">
    <source>
        <dbReference type="HAMAP-Rule" id="MF_00175"/>
    </source>
</evidence>
<evidence type="ECO:0000255" key="2">
    <source>
        <dbReference type="PROSITE-ProRule" id="PRU01250"/>
    </source>
</evidence>
<sequence>MADKKGSNSEKLLYCSFCGKSQHEVKKLIAGPSVFICDECIDLCNEIIRDEAAAAGVEASLSRSDLPSPQEIRDILDQYVIGQERAKKILAVAVYNHYKRLKHLDKKDDVELSKSNILLIGPTGSGKTLLAQTLARLLNVPFVIADATTLTEAGYVGEDVENIIQKLLQNCNYEVDKAQRGIVYIDEIDKISRKSDNPSITRDVSGEGVQQALLKLVEGTMASVPPQGGRKHPNQDFIQVDTTNILFICGGAFDGLEKVITDRTEKTGIGFGATVKSKQERDAGEVLRETEPEDLIKFGLIPELIGRLPVVATLGKLDEAALMKILVEPKNALVKQYHKLFAMERVELEIRPGALQAVARKAIRRKTGARGLRSIIEQALLDVMYELPTMKGVSKVIIDENVIDGDGKPLLIYEDTPKVAGSN</sequence>
<gene>
    <name evidence="1" type="primary">clpX</name>
    <name type="ordered locus">Bcep18194_A5223</name>
</gene>
<reference key="1">
    <citation type="submission" date="2005-10" db="EMBL/GenBank/DDBJ databases">
        <title>Complete sequence of chromosome 1 of Burkholderia sp. 383.</title>
        <authorList>
            <consortium name="US DOE Joint Genome Institute"/>
            <person name="Copeland A."/>
            <person name="Lucas S."/>
            <person name="Lapidus A."/>
            <person name="Barry K."/>
            <person name="Detter J.C."/>
            <person name="Glavina T."/>
            <person name="Hammon N."/>
            <person name="Israni S."/>
            <person name="Pitluck S."/>
            <person name="Chain P."/>
            <person name="Malfatti S."/>
            <person name="Shin M."/>
            <person name="Vergez L."/>
            <person name="Schmutz J."/>
            <person name="Larimer F."/>
            <person name="Land M."/>
            <person name="Kyrpides N."/>
            <person name="Lykidis A."/>
            <person name="Richardson P."/>
        </authorList>
    </citation>
    <scope>NUCLEOTIDE SEQUENCE [LARGE SCALE GENOMIC DNA]</scope>
    <source>
        <strain>ATCC 17760 / DSM 23089 / LMG 22485 / NCIMB 9086 / R18194 / 383</strain>
    </source>
</reference>
<comment type="function">
    <text evidence="1">ATP-dependent specificity component of the Clp protease. It directs the protease to specific substrates. Can perform chaperone functions in the absence of ClpP.</text>
</comment>
<comment type="subunit">
    <text evidence="1">Component of the ClpX-ClpP complex. Forms a hexameric ring that, in the presence of ATP, binds to fourteen ClpP subunits assembled into a disk-like structure with a central cavity, resembling the structure of eukaryotic proteasomes.</text>
</comment>
<comment type="similarity">
    <text evidence="1">Belongs to the ClpX chaperone family.</text>
</comment>
<proteinExistence type="inferred from homology"/>
<dbReference type="EMBL" id="CP000151">
    <property type="protein sequence ID" value="ABB08817.1"/>
    <property type="molecule type" value="Genomic_DNA"/>
</dbReference>
<dbReference type="RefSeq" id="WP_006489345.1">
    <property type="nucleotide sequence ID" value="NZ_LDWP01000007.1"/>
</dbReference>
<dbReference type="SMR" id="Q39FE9"/>
<dbReference type="GeneID" id="98105550"/>
<dbReference type="KEGG" id="bur:Bcep18194_A5223"/>
<dbReference type="HOGENOM" id="CLU_014218_8_2_4"/>
<dbReference type="Proteomes" id="UP000002705">
    <property type="component" value="Chromosome 1"/>
</dbReference>
<dbReference type="GO" id="GO:0009376">
    <property type="term" value="C:HslUV protease complex"/>
    <property type="evidence" value="ECO:0007669"/>
    <property type="project" value="TreeGrafter"/>
</dbReference>
<dbReference type="GO" id="GO:0005524">
    <property type="term" value="F:ATP binding"/>
    <property type="evidence" value="ECO:0007669"/>
    <property type="project" value="UniProtKB-UniRule"/>
</dbReference>
<dbReference type="GO" id="GO:0016887">
    <property type="term" value="F:ATP hydrolysis activity"/>
    <property type="evidence" value="ECO:0007669"/>
    <property type="project" value="InterPro"/>
</dbReference>
<dbReference type="GO" id="GO:0140662">
    <property type="term" value="F:ATP-dependent protein folding chaperone"/>
    <property type="evidence" value="ECO:0007669"/>
    <property type="project" value="InterPro"/>
</dbReference>
<dbReference type="GO" id="GO:0046983">
    <property type="term" value="F:protein dimerization activity"/>
    <property type="evidence" value="ECO:0007669"/>
    <property type="project" value="InterPro"/>
</dbReference>
<dbReference type="GO" id="GO:0051082">
    <property type="term" value="F:unfolded protein binding"/>
    <property type="evidence" value="ECO:0007669"/>
    <property type="project" value="UniProtKB-UniRule"/>
</dbReference>
<dbReference type="GO" id="GO:0008270">
    <property type="term" value="F:zinc ion binding"/>
    <property type="evidence" value="ECO:0007669"/>
    <property type="project" value="InterPro"/>
</dbReference>
<dbReference type="GO" id="GO:0051301">
    <property type="term" value="P:cell division"/>
    <property type="evidence" value="ECO:0007669"/>
    <property type="project" value="TreeGrafter"/>
</dbReference>
<dbReference type="GO" id="GO:0051603">
    <property type="term" value="P:proteolysis involved in protein catabolic process"/>
    <property type="evidence" value="ECO:0007669"/>
    <property type="project" value="TreeGrafter"/>
</dbReference>
<dbReference type="CDD" id="cd19497">
    <property type="entry name" value="RecA-like_ClpX"/>
    <property type="match status" value="1"/>
</dbReference>
<dbReference type="FunFam" id="1.10.8.60:FF:000002">
    <property type="entry name" value="ATP-dependent Clp protease ATP-binding subunit ClpX"/>
    <property type="match status" value="1"/>
</dbReference>
<dbReference type="FunFam" id="3.40.50.300:FF:000005">
    <property type="entry name" value="ATP-dependent Clp protease ATP-binding subunit ClpX"/>
    <property type="match status" value="1"/>
</dbReference>
<dbReference type="Gene3D" id="1.10.8.60">
    <property type="match status" value="1"/>
</dbReference>
<dbReference type="Gene3D" id="6.20.220.10">
    <property type="entry name" value="ClpX chaperone, C4-type zinc finger domain"/>
    <property type="match status" value="1"/>
</dbReference>
<dbReference type="Gene3D" id="3.40.50.300">
    <property type="entry name" value="P-loop containing nucleotide triphosphate hydrolases"/>
    <property type="match status" value="1"/>
</dbReference>
<dbReference type="HAMAP" id="MF_00175">
    <property type="entry name" value="ClpX"/>
    <property type="match status" value="1"/>
</dbReference>
<dbReference type="InterPro" id="IPR003593">
    <property type="entry name" value="AAA+_ATPase"/>
</dbReference>
<dbReference type="InterPro" id="IPR050052">
    <property type="entry name" value="ATP-dep_Clp_protease_ClpX"/>
</dbReference>
<dbReference type="InterPro" id="IPR003959">
    <property type="entry name" value="ATPase_AAA_core"/>
</dbReference>
<dbReference type="InterPro" id="IPR019489">
    <property type="entry name" value="Clp_ATPase_C"/>
</dbReference>
<dbReference type="InterPro" id="IPR004487">
    <property type="entry name" value="Clp_protease_ATP-bd_su_ClpX"/>
</dbReference>
<dbReference type="InterPro" id="IPR046425">
    <property type="entry name" value="ClpX_bact"/>
</dbReference>
<dbReference type="InterPro" id="IPR027417">
    <property type="entry name" value="P-loop_NTPase"/>
</dbReference>
<dbReference type="InterPro" id="IPR010603">
    <property type="entry name" value="Znf_CppX_C4"/>
</dbReference>
<dbReference type="InterPro" id="IPR038366">
    <property type="entry name" value="Znf_CppX_C4_sf"/>
</dbReference>
<dbReference type="NCBIfam" id="TIGR00382">
    <property type="entry name" value="clpX"/>
    <property type="match status" value="1"/>
</dbReference>
<dbReference type="NCBIfam" id="NF003745">
    <property type="entry name" value="PRK05342.1"/>
    <property type="match status" value="1"/>
</dbReference>
<dbReference type="PANTHER" id="PTHR48102:SF7">
    <property type="entry name" value="ATP-DEPENDENT CLP PROTEASE ATP-BINDING SUBUNIT CLPX-LIKE, MITOCHONDRIAL"/>
    <property type="match status" value="1"/>
</dbReference>
<dbReference type="PANTHER" id="PTHR48102">
    <property type="entry name" value="ATP-DEPENDENT CLP PROTEASE ATP-BINDING SUBUNIT CLPX-LIKE, MITOCHONDRIAL-RELATED"/>
    <property type="match status" value="1"/>
</dbReference>
<dbReference type="Pfam" id="PF07724">
    <property type="entry name" value="AAA_2"/>
    <property type="match status" value="1"/>
</dbReference>
<dbReference type="Pfam" id="PF10431">
    <property type="entry name" value="ClpB_D2-small"/>
    <property type="match status" value="1"/>
</dbReference>
<dbReference type="Pfam" id="PF06689">
    <property type="entry name" value="zf-C4_ClpX"/>
    <property type="match status" value="1"/>
</dbReference>
<dbReference type="SMART" id="SM00382">
    <property type="entry name" value="AAA"/>
    <property type="match status" value="1"/>
</dbReference>
<dbReference type="SMART" id="SM01086">
    <property type="entry name" value="ClpB_D2-small"/>
    <property type="match status" value="1"/>
</dbReference>
<dbReference type="SMART" id="SM00994">
    <property type="entry name" value="zf-C4_ClpX"/>
    <property type="match status" value="1"/>
</dbReference>
<dbReference type="SUPFAM" id="SSF57716">
    <property type="entry name" value="Glucocorticoid receptor-like (DNA-binding domain)"/>
    <property type="match status" value="1"/>
</dbReference>
<dbReference type="SUPFAM" id="SSF52540">
    <property type="entry name" value="P-loop containing nucleoside triphosphate hydrolases"/>
    <property type="match status" value="1"/>
</dbReference>
<dbReference type="PROSITE" id="PS51902">
    <property type="entry name" value="CLPX_ZB"/>
    <property type="match status" value="1"/>
</dbReference>
<protein>
    <recommendedName>
        <fullName evidence="1">ATP-dependent Clp protease ATP-binding subunit ClpX</fullName>
    </recommendedName>
</protein>
<keyword id="KW-0067">ATP-binding</keyword>
<keyword id="KW-0143">Chaperone</keyword>
<keyword id="KW-0479">Metal-binding</keyword>
<keyword id="KW-0547">Nucleotide-binding</keyword>
<keyword id="KW-0862">Zinc</keyword>
<accession>Q39FE9</accession>